<keyword id="KW-0175">Coiled coil</keyword>
<keyword id="KW-0963">Cytoplasm</keyword>
<keyword id="KW-0539">Nucleus</keyword>
<keyword id="KW-1185">Reference proteome</keyword>
<keyword id="KW-0694">RNA-binding</keyword>
<accession>Q9FJN9</accession>
<dbReference type="EMBL" id="AB013395">
    <property type="protein sequence ID" value="BAB11662.1"/>
    <property type="molecule type" value="Genomic_DNA"/>
</dbReference>
<dbReference type="EMBL" id="CP002688">
    <property type="protein sequence ID" value="AED98030.1"/>
    <property type="molecule type" value="Genomic_DNA"/>
</dbReference>
<dbReference type="EMBL" id="AF386984">
    <property type="protein sequence ID" value="AAK62429.1"/>
    <property type="molecule type" value="mRNA"/>
</dbReference>
<dbReference type="EMBL" id="BT000018">
    <property type="protein sequence ID" value="AAN15337.1"/>
    <property type="molecule type" value="mRNA"/>
</dbReference>
<dbReference type="RefSeq" id="NP_201329.1">
    <property type="nucleotide sequence ID" value="NM_125924.3"/>
</dbReference>
<dbReference type="SMR" id="Q9FJN9"/>
<dbReference type="BioGRID" id="21893">
    <property type="interactions" value="6"/>
</dbReference>
<dbReference type="FunCoup" id="Q9FJN9">
    <property type="interactions" value="4430"/>
</dbReference>
<dbReference type="IntAct" id="Q9FJN9">
    <property type="interactions" value="5"/>
</dbReference>
<dbReference type="STRING" id="3702.Q9FJN9"/>
<dbReference type="PaxDb" id="3702-AT5G65260.1"/>
<dbReference type="ProteomicsDB" id="234945"/>
<dbReference type="EnsemblPlants" id="AT5G65260.1">
    <property type="protein sequence ID" value="AT5G65260.1"/>
    <property type="gene ID" value="AT5G65260"/>
</dbReference>
<dbReference type="GeneID" id="836651"/>
<dbReference type="Gramene" id="AT5G65260.1">
    <property type="protein sequence ID" value="AT5G65260.1"/>
    <property type="gene ID" value="AT5G65260"/>
</dbReference>
<dbReference type="KEGG" id="ath:AT5G65260"/>
<dbReference type="Araport" id="AT5G65260"/>
<dbReference type="TAIR" id="AT5G65260"/>
<dbReference type="eggNOG" id="KOG4209">
    <property type="taxonomic scope" value="Eukaryota"/>
</dbReference>
<dbReference type="HOGENOM" id="CLU_012062_23_4_1"/>
<dbReference type="InParanoid" id="Q9FJN9"/>
<dbReference type="OMA" id="YRGRATY"/>
<dbReference type="OrthoDB" id="4726at2759"/>
<dbReference type="PhylomeDB" id="Q9FJN9"/>
<dbReference type="PRO" id="PR:Q9FJN9"/>
<dbReference type="Proteomes" id="UP000006548">
    <property type="component" value="Chromosome 5"/>
</dbReference>
<dbReference type="ExpressionAtlas" id="Q9FJN9">
    <property type="expression patterns" value="baseline and differential"/>
</dbReference>
<dbReference type="GO" id="GO:0005737">
    <property type="term" value="C:cytoplasm"/>
    <property type="evidence" value="ECO:0007669"/>
    <property type="project" value="UniProtKB-SubCell"/>
</dbReference>
<dbReference type="GO" id="GO:0016607">
    <property type="term" value="C:nuclear speck"/>
    <property type="evidence" value="ECO:0000314"/>
    <property type="project" value="UniProtKB"/>
</dbReference>
<dbReference type="GO" id="GO:0003729">
    <property type="term" value="F:mRNA binding"/>
    <property type="evidence" value="ECO:0000314"/>
    <property type="project" value="TAIR"/>
</dbReference>
<dbReference type="CDD" id="cd12306">
    <property type="entry name" value="RRM_II_PABPs"/>
    <property type="match status" value="1"/>
</dbReference>
<dbReference type="FunFam" id="3.30.70.330:FF:000751">
    <property type="entry name" value="Polyadenylate-binding protein 1"/>
    <property type="match status" value="1"/>
</dbReference>
<dbReference type="Gene3D" id="3.30.70.330">
    <property type="match status" value="1"/>
</dbReference>
<dbReference type="InterPro" id="IPR012677">
    <property type="entry name" value="Nucleotide-bd_a/b_plait_sf"/>
</dbReference>
<dbReference type="InterPro" id="IPR035979">
    <property type="entry name" value="RBD_domain_sf"/>
</dbReference>
<dbReference type="InterPro" id="IPR000504">
    <property type="entry name" value="RRM_dom"/>
</dbReference>
<dbReference type="PANTHER" id="PTHR23236">
    <property type="entry name" value="EUKARYOTIC TRANSLATION INITIATION FACTOR 4B/4H"/>
    <property type="match status" value="1"/>
</dbReference>
<dbReference type="PANTHER" id="PTHR23236:SF102">
    <property type="entry name" value="POLYADENYLATE-BINDING PROTEIN 2-RELATED"/>
    <property type="match status" value="1"/>
</dbReference>
<dbReference type="Pfam" id="PF00076">
    <property type="entry name" value="RRM_1"/>
    <property type="match status" value="1"/>
</dbReference>
<dbReference type="SMART" id="SM00360">
    <property type="entry name" value="RRM"/>
    <property type="match status" value="1"/>
</dbReference>
<dbReference type="SUPFAM" id="SSF54928">
    <property type="entry name" value="RNA-binding domain, RBD"/>
    <property type="match status" value="1"/>
</dbReference>
<dbReference type="PROSITE" id="PS50102">
    <property type="entry name" value="RRM"/>
    <property type="match status" value="1"/>
</dbReference>
<protein>
    <recommendedName>
        <fullName evidence="10">Polyadenylate-binding protein 2</fullName>
        <shortName evidence="10">AtPabN2</shortName>
        <shortName evidence="11">AtPabN3</shortName>
        <shortName evidence="10">Poly(A)-binding protein 2</shortName>
    </recommendedName>
    <alternativeName>
        <fullName evidence="12">Nuclear poly(A)-binding protein 2</fullName>
    </alternativeName>
    <alternativeName>
        <fullName evidence="12">Poly(A)-binding protein II</fullName>
        <shortName evidence="12">PABII</shortName>
    </alternativeName>
</protein>
<proteinExistence type="evidence at protein level"/>
<organism evidence="15">
    <name type="scientific">Arabidopsis thaliana</name>
    <name type="common">Mouse-ear cress</name>
    <dbReference type="NCBI Taxonomy" id="3702"/>
    <lineage>
        <taxon>Eukaryota</taxon>
        <taxon>Viridiplantae</taxon>
        <taxon>Streptophyta</taxon>
        <taxon>Embryophyta</taxon>
        <taxon>Tracheophyta</taxon>
        <taxon>Spermatophyta</taxon>
        <taxon>Magnoliopsida</taxon>
        <taxon>eudicotyledons</taxon>
        <taxon>Gunneridae</taxon>
        <taxon>Pentapetalae</taxon>
        <taxon>rosids</taxon>
        <taxon>malvids</taxon>
        <taxon>Brassicales</taxon>
        <taxon>Brassicaceae</taxon>
        <taxon>Camelineae</taxon>
        <taxon>Arabidopsis</taxon>
    </lineage>
</organism>
<name>PABN2_ARATH</name>
<evidence type="ECO:0000250" key="1">
    <source>
        <dbReference type="UniProtKB" id="Q28165"/>
    </source>
</evidence>
<evidence type="ECO:0000250" key="2">
    <source>
        <dbReference type="UniProtKB" id="Q7KNF2"/>
    </source>
</evidence>
<evidence type="ECO:0000250" key="3">
    <source>
        <dbReference type="UniProtKB" id="Q86U42"/>
    </source>
</evidence>
<evidence type="ECO:0000255" key="4"/>
<evidence type="ECO:0000255" key="5">
    <source>
        <dbReference type="PROSITE-ProRule" id="PRU00176"/>
    </source>
</evidence>
<evidence type="ECO:0000255" key="6">
    <source>
        <dbReference type="PROSITE-ProRule" id="PRU00768"/>
    </source>
</evidence>
<evidence type="ECO:0000256" key="7">
    <source>
        <dbReference type="SAM" id="MobiDB-lite"/>
    </source>
</evidence>
<evidence type="ECO:0000269" key="8">
    <source>
    </source>
</evidence>
<evidence type="ECO:0000269" key="9">
    <source>
    </source>
</evidence>
<evidence type="ECO:0000303" key="10">
    <source>
    </source>
</evidence>
<evidence type="ECO:0000303" key="11">
    <source>
    </source>
</evidence>
<evidence type="ECO:0000305" key="12"/>
<evidence type="ECO:0000312" key="13">
    <source>
        <dbReference type="Araport" id="AT5G65260"/>
    </source>
</evidence>
<evidence type="ECO:0000312" key="14">
    <source>
        <dbReference type="EMBL" id="AAK62429.1"/>
    </source>
</evidence>
<evidence type="ECO:0000312" key="15">
    <source>
        <dbReference type="Proteomes" id="UP000006548"/>
    </source>
</evidence>
<comment type="function">
    <text evidence="2">Involved in the 3'-end formation of mRNA precursors (pre-mRNA) by the addition of a poly(A) tail of 200-250 nt to the upstream cleavage product. Stimulates poly(A) polymerase (PAPOLA) conferring processivity on the poly(A) tail elongation reaction and also controls the poly(A) tail length. Increases the affinity of poly(A) polymerase for RNA. Binds to poly(A) and to poly(G) with high affinity. May protect the poly(A) tail from degradation.</text>
</comment>
<comment type="subunit">
    <text evidence="3 8 9">Monomer and homooligomer (PubMed:18479511). Binds RNA as a monomer and oligomerizes when bound to poly(A) (By similarity). Forms a complex with cleavage and polyadenylation specificity factor (CPSF) subunits PAPS2, FIPS5, PABN3 and PABN1 (PubMed:18479511). Interacts with CSP3 (PubMed:23334891).</text>
</comment>
<comment type="subcellular location">
    <subcellularLocation>
        <location evidence="6 9">Nucleus speckle</location>
    </subcellularLocation>
    <subcellularLocation>
        <location evidence="2">Cytoplasm</location>
    </subcellularLocation>
    <text evidence="2">Shuttles between the nucleus and the cytoplasm but predominantly found in the nucleus.</text>
</comment>
<comment type="domain">
    <text evidence="1">The RRM domain is essential for the recognition of specific adenine bases in the poly(A) tail, but not sufficient for poly(A) binding.</text>
</comment>
<sequence>MEEEEHEVYGGEIPDVGEMDGDMEALNPDLDMAAADDDAVKELDEMKKRLKEMEDEAAALREMQAKVEKEMGAQDPASIAANQAGKEEVDARSVFVGNVDYACTPEEVQQHFQTCGTVHRVTILTDKFGQPKGFAYVEFVEVEAVQEALQLNESELHGRQLKVLQKRTNVPGLKQFRGRRFNPYMGYRFRRPFMSPYMYSPYGYGKAPRFRRPMRYMPYQ</sequence>
<gene>
    <name evidence="10" type="primary">PABN2</name>
    <name evidence="13" type="ordered locus">At5g65260</name>
    <name evidence="14" type="ORF">MQN23.20</name>
</gene>
<reference key="1">
    <citation type="journal article" date="1998" name="DNA Res.">
        <title>Structural analysis of Arabidopsis thaliana chromosome 5. VI. Sequence features of the regions of 1,367,185 bp covered by 19 physically assigned P1 and TAC clones.</title>
        <authorList>
            <person name="Kotani H."/>
            <person name="Nakamura Y."/>
            <person name="Sato S."/>
            <person name="Asamizu E."/>
            <person name="Kaneko T."/>
            <person name="Miyajima N."/>
            <person name="Tabata S."/>
        </authorList>
    </citation>
    <scope>NUCLEOTIDE SEQUENCE [LARGE SCALE GENOMIC DNA]</scope>
    <source>
        <strain>cv. Columbia</strain>
    </source>
</reference>
<reference key="2">
    <citation type="journal article" date="2017" name="Plant J.">
        <title>Araport11: a complete reannotation of the Arabidopsis thaliana reference genome.</title>
        <authorList>
            <person name="Cheng C.Y."/>
            <person name="Krishnakumar V."/>
            <person name="Chan A.P."/>
            <person name="Thibaud-Nissen F."/>
            <person name="Schobel S."/>
            <person name="Town C.D."/>
        </authorList>
    </citation>
    <scope>GENOME REANNOTATION</scope>
    <source>
        <strain>cv. Columbia</strain>
    </source>
</reference>
<reference key="3">
    <citation type="journal article" date="2003" name="Science">
        <title>Empirical analysis of transcriptional activity in the Arabidopsis genome.</title>
        <authorList>
            <person name="Yamada K."/>
            <person name="Lim J."/>
            <person name="Dale J.M."/>
            <person name="Chen H."/>
            <person name="Shinn P."/>
            <person name="Palm C.J."/>
            <person name="Southwick A.M."/>
            <person name="Wu H.C."/>
            <person name="Kim C.J."/>
            <person name="Nguyen M."/>
            <person name="Pham P.K."/>
            <person name="Cheuk R.F."/>
            <person name="Karlin-Newmann G."/>
            <person name="Liu S.X."/>
            <person name="Lam B."/>
            <person name="Sakano H."/>
            <person name="Wu T."/>
            <person name="Yu G."/>
            <person name="Miranda M."/>
            <person name="Quach H.L."/>
            <person name="Tripp M."/>
            <person name="Chang C.H."/>
            <person name="Lee J.M."/>
            <person name="Toriumi M.J."/>
            <person name="Chan M.M."/>
            <person name="Tang C.C."/>
            <person name="Onodera C.S."/>
            <person name="Deng J.M."/>
            <person name="Akiyama K."/>
            <person name="Ansari Y."/>
            <person name="Arakawa T."/>
            <person name="Banh J."/>
            <person name="Banno F."/>
            <person name="Bowser L."/>
            <person name="Brooks S.Y."/>
            <person name="Carninci P."/>
            <person name="Chao Q."/>
            <person name="Choy N."/>
            <person name="Enju A."/>
            <person name="Goldsmith A.D."/>
            <person name="Gurjal M."/>
            <person name="Hansen N.F."/>
            <person name="Hayashizaki Y."/>
            <person name="Johnson-Hopson C."/>
            <person name="Hsuan V.W."/>
            <person name="Iida K."/>
            <person name="Karnes M."/>
            <person name="Khan S."/>
            <person name="Koesema E."/>
            <person name="Ishida J."/>
            <person name="Jiang P.X."/>
            <person name="Jones T."/>
            <person name="Kawai J."/>
            <person name="Kamiya A."/>
            <person name="Meyers C."/>
            <person name="Nakajima M."/>
            <person name="Narusaka M."/>
            <person name="Seki M."/>
            <person name="Sakurai T."/>
            <person name="Satou M."/>
            <person name="Tamse R."/>
            <person name="Vaysberg M."/>
            <person name="Wallender E.K."/>
            <person name="Wong C."/>
            <person name="Yamamura Y."/>
            <person name="Yuan S."/>
            <person name="Shinozaki K."/>
            <person name="Davis R.W."/>
            <person name="Theologis A."/>
            <person name="Ecker J.R."/>
        </authorList>
    </citation>
    <scope>NUCLEOTIDE SEQUENCE [LARGE SCALE MRNA]</scope>
    <source>
        <strain>cv. Columbia</strain>
    </source>
</reference>
<reference key="4">
    <citation type="journal article" date="2008" name="BMC Genomics">
        <title>Arabidopsis mRNA polyadenylation machinery: comprehensive analysis of protein-protein interactions and gene expression profiling.</title>
        <authorList>
            <person name="Hunt A.G."/>
            <person name="Xu R."/>
            <person name="Addepalli B."/>
            <person name="Rao S."/>
            <person name="Forbes K.P."/>
            <person name="Meeks L.R."/>
            <person name="Xing D."/>
            <person name="Mo M."/>
            <person name="Zhao H."/>
            <person name="Bandyopadhyay A."/>
            <person name="Dampanaboina L."/>
            <person name="Marion A."/>
            <person name="Von Lanken C."/>
            <person name="Li Q.Q."/>
        </authorList>
    </citation>
    <scope>SUBUNIT</scope>
    <scope>HOMODIMER</scope>
    <scope>INTERACTION WITH PAPS2; PAPS4; FIPS5; PABN3 AND PABN1</scope>
    <scope>GENE FAMILY</scope>
    <scope>NOMENCLATURE</scope>
</reference>
<reference key="5">
    <citation type="journal article" date="2013" name="Cell Stress Chaperones">
        <title>Interactome analysis reveals versatile functions of Arabidopsis COLD SHOCK DOMAIN PROTEIN 3 in RNA processing within the nucleus and cytoplasm.</title>
        <authorList>
            <person name="Kim M.H."/>
            <person name="Sonoda Y."/>
            <person name="Sasaki K."/>
            <person name="Kaminaka H."/>
            <person name="Imai R."/>
        </authorList>
    </citation>
    <scope>INTERACTION WITH CSP3</scope>
    <scope>SUBCELLULAR LOCATION</scope>
</reference>
<feature type="chain" id="PRO_0000431329" description="Polyadenylate-binding protein 2">
    <location>
        <begin position="1"/>
        <end position="220"/>
    </location>
</feature>
<feature type="domain" description="RRM" evidence="5">
    <location>
        <begin position="92"/>
        <end position="168"/>
    </location>
</feature>
<feature type="region of interest" description="Disordered" evidence="7">
    <location>
        <begin position="1"/>
        <end position="24"/>
    </location>
</feature>
<feature type="region of interest" description="Necessary for homooligomerization" evidence="3">
    <location>
        <begin position="78"/>
        <end position="219"/>
    </location>
</feature>
<feature type="coiled-coil region" evidence="4">
    <location>
        <begin position="34"/>
        <end position="74"/>
    </location>
</feature>
<feature type="short sequence motif" description="Nuclear localization signal" evidence="6">
    <location>
        <begin position="165"/>
        <end position="172"/>
    </location>
</feature>